<comment type="catalytic activity">
    <reaction>
        <text>L-seryl-[protein] + ATP = O-phospho-L-seryl-[protein] + ADP + H(+)</text>
        <dbReference type="Rhea" id="RHEA:17989"/>
        <dbReference type="Rhea" id="RHEA-COMP:9863"/>
        <dbReference type="Rhea" id="RHEA-COMP:11604"/>
        <dbReference type="ChEBI" id="CHEBI:15378"/>
        <dbReference type="ChEBI" id="CHEBI:29999"/>
        <dbReference type="ChEBI" id="CHEBI:30616"/>
        <dbReference type="ChEBI" id="CHEBI:83421"/>
        <dbReference type="ChEBI" id="CHEBI:456216"/>
        <dbReference type="EC" id="2.7.11.1"/>
    </reaction>
</comment>
<comment type="catalytic activity">
    <reaction>
        <text>L-threonyl-[protein] + ATP = O-phospho-L-threonyl-[protein] + ADP + H(+)</text>
        <dbReference type="Rhea" id="RHEA:46608"/>
        <dbReference type="Rhea" id="RHEA-COMP:11060"/>
        <dbReference type="Rhea" id="RHEA-COMP:11605"/>
        <dbReference type="ChEBI" id="CHEBI:15378"/>
        <dbReference type="ChEBI" id="CHEBI:30013"/>
        <dbReference type="ChEBI" id="CHEBI:30616"/>
        <dbReference type="ChEBI" id="CHEBI:61977"/>
        <dbReference type="ChEBI" id="CHEBI:456216"/>
        <dbReference type="EC" id="2.7.11.1"/>
    </reaction>
</comment>
<comment type="subunit">
    <text evidence="1">Interacts with PDLIM1/CLP-36.</text>
</comment>
<comment type="subcellular location">
    <subcellularLocation>
        <location>Nucleus</location>
    </subcellularLocation>
    <subcellularLocation>
        <location>Nucleus</location>
        <location>Nucleolus</location>
    </subcellularLocation>
    <subcellularLocation>
        <location>Cytoplasm</location>
    </subcellularLocation>
    <text evidence="1">When associated with PDLIM1, it is mostly found in cytoplasm, localized to actin stress fibers.</text>
</comment>
<comment type="PTM">
    <text evidence="1">Autophosphorylated.</text>
</comment>
<comment type="similarity">
    <text evidence="2">Belongs to the protein kinase superfamily. Ser/Thr protein kinase family.</text>
</comment>
<comment type="sequence caution" evidence="5">
    <conflict type="erroneous initiation">
        <sequence resource="EMBL-CDS" id="AAI38905"/>
    </conflict>
</comment>
<comment type="sequence caution" evidence="5">
    <conflict type="erroneous initiation">
        <sequence resource="EMBL-CDS" id="AAI38906"/>
    </conflict>
</comment>
<comment type="sequence caution" evidence="5">
    <conflict type="erroneous initiation">
        <sequence resource="EMBL-CDS" id="BAC25152"/>
    </conflict>
    <text>Truncated N-terminus.</text>
</comment>
<comment type="sequence caution" evidence="5">
    <conflict type="frameshift">
        <sequence resource="EMBL-CDS" id="BAC25152"/>
    </conflict>
</comment>
<comment type="sequence caution" evidence="5">
    <conflict type="erroneous initiation">
        <sequence resource="EMBL-CDS" id="BAE38504"/>
    </conflict>
</comment>
<comment type="sequence caution" evidence="5">
    <conflict type="erroneous initiation">
        <sequence resource="EMBL-CDS" id="CAM22106"/>
    </conflict>
</comment>
<proteinExistence type="evidence at protein level"/>
<gene>
    <name type="primary">Stk35</name>
    <name type="synonym">Stk35l1</name>
</gene>
<name>STK35_MOUSE</name>
<reference key="1">
    <citation type="journal article" date="2009" name="PLoS Biol.">
        <title>Lineage-specific biology revealed by a finished genome assembly of the mouse.</title>
        <authorList>
            <person name="Church D.M."/>
            <person name="Goodstadt L."/>
            <person name="Hillier L.W."/>
            <person name="Zody M.C."/>
            <person name="Goldstein S."/>
            <person name="She X."/>
            <person name="Bult C.J."/>
            <person name="Agarwala R."/>
            <person name="Cherry J.L."/>
            <person name="DiCuccio M."/>
            <person name="Hlavina W."/>
            <person name="Kapustin Y."/>
            <person name="Meric P."/>
            <person name="Maglott D."/>
            <person name="Birtle Z."/>
            <person name="Marques A.C."/>
            <person name="Graves T."/>
            <person name="Zhou S."/>
            <person name="Teague B."/>
            <person name="Potamousis K."/>
            <person name="Churas C."/>
            <person name="Place M."/>
            <person name="Herschleb J."/>
            <person name="Runnheim R."/>
            <person name="Forrest D."/>
            <person name="Amos-Landgraf J."/>
            <person name="Schwartz D.C."/>
            <person name="Cheng Z."/>
            <person name="Lindblad-Toh K."/>
            <person name="Eichler E.E."/>
            <person name="Ponting C.P."/>
        </authorList>
    </citation>
    <scope>NUCLEOTIDE SEQUENCE [LARGE SCALE GENOMIC DNA]</scope>
    <source>
        <strain>C57BL/6J</strain>
    </source>
</reference>
<reference key="2">
    <citation type="journal article" date="2004" name="Genome Res.">
        <title>The status, quality, and expansion of the NIH full-length cDNA project: the Mammalian Gene Collection (MGC).</title>
        <authorList>
            <consortium name="The MGC Project Team"/>
        </authorList>
    </citation>
    <scope>NUCLEOTIDE SEQUENCE [LARGE SCALE MRNA] OF 25-539</scope>
    <source>
        <tissue>Olfactory epithelium</tissue>
    </source>
</reference>
<reference key="3">
    <citation type="journal article" date="2005" name="Science">
        <title>The transcriptional landscape of the mammalian genome.</title>
        <authorList>
            <person name="Carninci P."/>
            <person name="Kasukawa T."/>
            <person name="Katayama S."/>
            <person name="Gough J."/>
            <person name="Frith M.C."/>
            <person name="Maeda N."/>
            <person name="Oyama R."/>
            <person name="Ravasi T."/>
            <person name="Lenhard B."/>
            <person name="Wells C."/>
            <person name="Kodzius R."/>
            <person name="Shimokawa K."/>
            <person name="Bajic V.B."/>
            <person name="Brenner S.E."/>
            <person name="Batalov S."/>
            <person name="Forrest A.R."/>
            <person name="Zavolan M."/>
            <person name="Davis M.J."/>
            <person name="Wilming L.G."/>
            <person name="Aidinis V."/>
            <person name="Allen J.E."/>
            <person name="Ambesi-Impiombato A."/>
            <person name="Apweiler R."/>
            <person name="Aturaliya R.N."/>
            <person name="Bailey T.L."/>
            <person name="Bansal M."/>
            <person name="Baxter L."/>
            <person name="Beisel K.W."/>
            <person name="Bersano T."/>
            <person name="Bono H."/>
            <person name="Chalk A.M."/>
            <person name="Chiu K.P."/>
            <person name="Choudhary V."/>
            <person name="Christoffels A."/>
            <person name="Clutterbuck D.R."/>
            <person name="Crowe M.L."/>
            <person name="Dalla E."/>
            <person name="Dalrymple B.P."/>
            <person name="de Bono B."/>
            <person name="Della Gatta G."/>
            <person name="di Bernardo D."/>
            <person name="Down T."/>
            <person name="Engstrom P."/>
            <person name="Fagiolini M."/>
            <person name="Faulkner G."/>
            <person name="Fletcher C.F."/>
            <person name="Fukushima T."/>
            <person name="Furuno M."/>
            <person name="Futaki S."/>
            <person name="Gariboldi M."/>
            <person name="Georgii-Hemming P."/>
            <person name="Gingeras T.R."/>
            <person name="Gojobori T."/>
            <person name="Green R.E."/>
            <person name="Gustincich S."/>
            <person name="Harbers M."/>
            <person name="Hayashi Y."/>
            <person name="Hensch T.K."/>
            <person name="Hirokawa N."/>
            <person name="Hill D."/>
            <person name="Huminiecki L."/>
            <person name="Iacono M."/>
            <person name="Ikeo K."/>
            <person name="Iwama A."/>
            <person name="Ishikawa T."/>
            <person name="Jakt M."/>
            <person name="Kanapin A."/>
            <person name="Katoh M."/>
            <person name="Kawasawa Y."/>
            <person name="Kelso J."/>
            <person name="Kitamura H."/>
            <person name="Kitano H."/>
            <person name="Kollias G."/>
            <person name="Krishnan S.P."/>
            <person name="Kruger A."/>
            <person name="Kummerfeld S.K."/>
            <person name="Kurochkin I.V."/>
            <person name="Lareau L.F."/>
            <person name="Lazarevic D."/>
            <person name="Lipovich L."/>
            <person name="Liu J."/>
            <person name="Liuni S."/>
            <person name="McWilliam S."/>
            <person name="Madan Babu M."/>
            <person name="Madera M."/>
            <person name="Marchionni L."/>
            <person name="Matsuda H."/>
            <person name="Matsuzawa S."/>
            <person name="Miki H."/>
            <person name="Mignone F."/>
            <person name="Miyake S."/>
            <person name="Morris K."/>
            <person name="Mottagui-Tabar S."/>
            <person name="Mulder N."/>
            <person name="Nakano N."/>
            <person name="Nakauchi H."/>
            <person name="Ng P."/>
            <person name="Nilsson R."/>
            <person name="Nishiguchi S."/>
            <person name="Nishikawa S."/>
            <person name="Nori F."/>
            <person name="Ohara O."/>
            <person name="Okazaki Y."/>
            <person name="Orlando V."/>
            <person name="Pang K.C."/>
            <person name="Pavan W.J."/>
            <person name="Pavesi G."/>
            <person name="Pesole G."/>
            <person name="Petrovsky N."/>
            <person name="Piazza S."/>
            <person name="Reed J."/>
            <person name="Reid J.F."/>
            <person name="Ring B.Z."/>
            <person name="Ringwald M."/>
            <person name="Rost B."/>
            <person name="Ruan Y."/>
            <person name="Salzberg S.L."/>
            <person name="Sandelin A."/>
            <person name="Schneider C."/>
            <person name="Schoenbach C."/>
            <person name="Sekiguchi K."/>
            <person name="Semple C.A."/>
            <person name="Seno S."/>
            <person name="Sessa L."/>
            <person name="Sheng Y."/>
            <person name="Shibata Y."/>
            <person name="Shimada H."/>
            <person name="Shimada K."/>
            <person name="Silva D."/>
            <person name="Sinclair B."/>
            <person name="Sperling S."/>
            <person name="Stupka E."/>
            <person name="Sugiura K."/>
            <person name="Sultana R."/>
            <person name="Takenaka Y."/>
            <person name="Taki K."/>
            <person name="Tammoja K."/>
            <person name="Tan S.L."/>
            <person name="Tang S."/>
            <person name="Taylor M.S."/>
            <person name="Tegner J."/>
            <person name="Teichmann S.A."/>
            <person name="Ueda H.R."/>
            <person name="van Nimwegen E."/>
            <person name="Verardo R."/>
            <person name="Wei C.L."/>
            <person name="Yagi K."/>
            <person name="Yamanishi H."/>
            <person name="Zabarovsky E."/>
            <person name="Zhu S."/>
            <person name="Zimmer A."/>
            <person name="Hide W."/>
            <person name="Bult C."/>
            <person name="Grimmond S.M."/>
            <person name="Teasdale R.D."/>
            <person name="Liu E.T."/>
            <person name="Brusic V."/>
            <person name="Quackenbush J."/>
            <person name="Wahlestedt C."/>
            <person name="Mattick J.S."/>
            <person name="Hume D.A."/>
            <person name="Kai C."/>
            <person name="Sasaki D."/>
            <person name="Tomaru Y."/>
            <person name="Fukuda S."/>
            <person name="Kanamori-Katayama M."/>
            <person name="Suzuki M."/>
            <person name="Aoki J."/>
            <person name="Arakawa T."/>
            <person name="Iida J."/>
            <person name="Imamura K."/>
            <person name="Itoh M."/>
            <person name="Kato T."/>
            <person name="Kawaji H."/>
            <person name="Kawagashira N."/>
            <person name="Kawashima T."/>
            <person name="Kojima M."/>
            <person name="Kondo S."/>
            <person name="Konno H."/>
            <person name="Nakano K."/>
            <person name="Ninomiya N."/>
            <person name="Nishio T."/>
            <person name="Okada M."/>
            <person name="Plessy C."/>
            <person name="Shibata K."/>
            <person name="Shiraki T."/>
            <person name="Suzuki S."/>
            <person name="Tagami M."/>
            <person name="Waki K."/>
            <person name="Watahiki A."/>
            <person name="Okamura-Oho Y."/>
            <person name="Suzuki H."/>
            <person name="Kawai J."/>
            <person name="Hayashizaki Y."/>
        </authorList>
    </citation>
    <scope>NUCLEOTIDE SEQUENCE [LARGE SCALE MRNA] OF 28-539</scope>
    <source>
        <strain>C57BL/6J</strain>
        <tissue>Lung</tissue>
        <tissue>Testis</tissue>
    </source>
</reference>
<reference key="4">
    <citation type="journal article" date="2010" name="Cell">
        <title>A tissue-specific atlas of mouse protein phosphorylation and expression.</title>
        <authorList>
            <person name="Huttlin E.L."/>
            <person name="Jedrychowski M.P."/>
            <person name="Elias J.E."/>
            <person name="Goswami T."/>
            <person name="Rad R."/>
            <person name="Beausoleil S.A."/>
            <person name="Villen J."/>
            <person name="Haas W."/>
            <person name="Sowa M.E."/>
            <person name="Gygi S.P."/>
        </authorList>
    </citation>
    <scope>IDENTIFICATION BY MASS SPECTROMETRY [LARGE SCALE ANALYSIS]</scope>
    <source>
        <tissue>Testis</tissue>
    </source>
</reference>
<feature type="chain" id="PRO_0000277618" description="Serine/threonine-protein kinase 35">
    <location>
        <begin position="1"/>
        <end position="539"/>
    </location>
</feature>
<feature type="domain" description="Protein kinase" evidence="2">
    <location>
        <begin position="207"/>
        <end position="535"/>
    </location>
</feature>
<feature type="region of interest" description="Disordered" evidence="4">
    <location>
        <begin position="103"/>
        <end position="161"/>
    </location>
</feature>
<feature type="compositionally biased region" description="Basic residues" evidence="4">
    <location>
        <begin position="148"/>
        <end position="160"/>
    </location>
</feature>
<feature type="active site" description="Proton acceptor" evidence="2 3">
    <location>
        <position position="365"/>
    </location>
</feature>
<feature type="binding site" evidence="2">
    <location>
        <begin position="213"/>
        <end position="221"/>
    </location>
    <ligand>
        <name>ATP</name>
        <dbReference type="ChEBI" id="CHEBI:30616"/>
    </ligand>
</feature>
<feature type="binding site" evidence="2">
    <location>
        <position position="236"/>
    </location>
    <ligand>
        <name>ATP</name>
        <dbReference type="ChEBI" id="CHEBI:30616"/>
    </ligand>
</feature>
<feature type="sequence conflict" description="In Ref. 3; BAE38504." evidence="5" ref="3">
    <original>W</original>
    <variation>G</variation>
    <location>
        <position position="28"/>
    </location>
</feature>
<feature type="sequence conflict" description="In Ref. 3; BAE38504/BAC25152." evidence="5" ref="3">
    <original>R</original>
    <variation>G</variation>
    <location>
        <position position="71"/>
    </location>
</feature>
<feature type="sequence conflict" description="In Ref. 3; BAC25152." evidence="5" ref="3">
    <original>R</original>
    <variation>S</variation>
    <location>
        <position position="147"/>
    </location>
</feature>
<feature type="sequence conflict" description="In Ref. 3; BAE38504." evidence="5" ref="3">
    <original>ERILGYAEEPCYLWFVMEYCEGGD</original>
    <variation>RSFGTHSLIVSRTGWQRVQVVVIS</variation>
    <location>
        <begin position="304"/>
        <end position="327"/>
    </location>
</feature>
<feature type="sequence conflict" description="In Ref. 3; BAC25152." evidence="5" ref="3">
    <original>P</original>
    <variation>A</variation>
    <location>
        <position position="337"/>
    </location>
</feature>
<feature type="sequence conflict" description="In Ref. 3; BAC25152." evidence="5" ref="3">
    <original>F</original>
    <variation>V</variation>
    <location>
        <position position="345"/>
    </location>
</feature>
<feature type="sequence conflict" description="In Ref. 3; BAC25152." evidence="5" ref="3">
    <original>DLKPDNILITERS</original>
    <variation>RPKARQHPDHRAV</variation>
    <location>
        <begin position="365"/>
        <end position="377"/>
    </location>
</feature>
<sequence>MGHQESPLTRAAAGGAAYIKRLRKVLSWRELGDGHGNLEAEASPGSVAVITRAAPRRATRSARLPASRPTRLCRQARLGTDHPPARAPRGNRFARKRNSAGQITIQGPAPPHLGARRRDEARGARAAPLLLPPPPAAMETGKENGARRGTKSPERKRRSPVQRVLCEKLRPAAQAMDPAGAEVPGEAFLARRRPDGGGGDVPARPRYSLLAEIGRGSYGVVYEAVAGRSGARVAVKKIRCDAPENVELALAEFWALTSLKRRHQNIVQFEECVLQRNGLAQRMSHGNKNSQLYLRLVETSLKGERILGYAEEPCYLWFVMEYCEGGDLNQYVLSRRPDPATNKSFMLQLTSAIAFLHKNHIVHRDLKPDNILITERSGTPILKVADFGLSKVCAGLAPRGKEGNQDNKNVNVNKYWLSSACGSDFYMAPEVWEGHYTAKADIFALGIIIWAMIERITFIDSETKKELLGTYIKQGTEIVPVGEALLENPKMELHIPQKRRTSMSEGVKQLLKDMLAANPQDRPDAFELETRMDQVTCAA</sequence>
<protein>
    <recommendedName>
        <fullName>Serine/threonine-protein kinase 35</fullName>
    </recommendedName>
    <alternativeName>
        <fullName>Serine/threonine-protein kinase 35 L1</fullName>
        <ecNumber>2.7.11.1</ecNumber>
    </alternativeName>
</protein>
<organism>
    <name type="scientific">Mus musculus</name>
    <name type="common">Mouse</name>
    <dbReference type="NCBI Taxonomy" id="10090"/>
    <lineage>
        <taxon>Eukaryota</taxon>
        <taxon>Metazoa</taxon>
        <taxon>Chordata</taxon>
        <taxon>Craniata</taxon>
        <taxon>Vertebrata</taxon>
        <taxon>Euteleostomi</taxon>
        <taxon>Mammalia</taxon>
        <taxon>Eutheria</taxon>
        <taxon>Euarchontoglires</taxon>
        <taxon>Glires</taxon>
        <taxon>Rodentia</taxon>
        <taxon>Myomorpha</taxon>
        <taxon>Muroidea</taxon>
        <taxon>Muridae</taxon>
        <taxon>Murinae</taxon>
        <taxon>Mus</taxon>
        <taxon>Mus</taxon>
    </lineage>
</organism>
<keyword id="KW-0067">ATP-binding</keyword>
<keyword id="KW-0963">Cytoplasm</keyword>
<keyword id="KW-0418">Kinase</keyword>
<keyword id="KW-0547">Nucleotide-binding</keyword>
<keyword id="KW-0539">Nucleus</keyword>
<keyword id="KW-0597">Phosphoprotein</keyword>
<keyword id="KW-1185">Reference proteome</keyword>
<keyword id="KW-0723">Serine/threonine-protein kinase</keyword>
<keyword id="KW-0808">Transferase</keyword>
<dbReference type="EC" id="2.7.11.1"/>
<dbReference type="EMBL" id="AL808137">
    <property type="protein sequence ID" value="CAM22106.1"/>
    <property type="status" value="ALT_INIT"/>
    <property type="molecule type" value="Genomic_DNA"/>
</dbReference>
<dbReference type="EMBL" id="BC047277">
    <property type="protein sequence ID" value="AAH47277.1"/>
    <property type="molecule type" value="mRNA"/>
</dbReference>
<dbReference type="EMBL" id="BC138904">
    <property type="protein sequence ID" value="AAI38905.1"/>
    <property type="status" value="ALT_INIT"/>
    <property type="molecule type" value="mRNA"/>
</dbReference>
<dbReference type="EMBL" id="BC138905">
    <property type="protein sequence ID" value="AAI38906.1"/>
    <property type="status" value="ALT_INIT"/>
    <property type="molecule type" value="mRNA"/>
</dbReference>
<dbReference type="EMBL" id="AK006778">
    <property type="protein sequence ID" value="BAC25152.1"/>
    <property type="status" value="ALT_SEQ"/>
    <property type="molecule type" value="mRNA"/>
</dbReference>
<dbReference type="EMBL" id="AK165988">
    <property type="protein sequence ID" value="BAE38504.1"/>
    <property type="status" value="ALT_INIT"/>
    <property type="molecule type" value="mRNA"/>
</dbReference>
<dbReference type="CCDS" id="CCDS16732.2"/>
<dbReference type="RefSeq" id="NP_899085.3">
    <property type="nucleotide sequence ID" value="NM_183262.3"/>
</dbReference>
<dbReference type="SMR" id="Q80ZW0"/>
<dbReference type="BioGRID" id="212113">
    <property type="interactions" value="3"/>
</dbReference>
<dbReference type="FunCoup" id="Q80ZW0">
    <property type="interactions" value="2278"/>
</dbReference>
<dbReference type="STRING" id="10090.ENSMUSP00000126541"/>
<dbReference type="iPTMnet" id="Q80ZW0"/>
<dbReference type="PhosphoSitePlus" id="Q80ZW0"/>
<dbReference type="PaxDb" id="10090-ENSMUSP00000126541"/>
<dbReference type="ProteomicsDB" id="258757"/>
<dbReference type="Antibodypedia" id="23148">
    <property type="antibodies" value="180 antibodies from 26 providers"/>
</dbReference>
<dbReference type="DNASU" id="67333"/>
<dbReference type="Ensembl" id="ENSMUST00000165413.9">
    <property type="protein sequence ID" value="ENSMUSP00000126541.3"/>
    <property type="gene ID" value="ENSMUSG00000037885.19"/>
</dbReference>
<dbReference type="GeneID" id="67333"/>
<dbReference type="KEGG" id="mmu:67333"/>
<dbReference type="UCSC" id="uc008mie.2">
    <property type="organism name" value="mouse"/>
</dbReference>
<dbReference type="AGR" id="MGI:1914583"/>
<dbReference type="CTD" id="140901"/>
<dbReference type="MGI" id="MGI:1914583">
    <property type="gene designation" value="Stk35"/>
</dbReference>
<dbReference type="VEuPathDB" id="HostDB:ENSMUSG00000037885"/>
<dbReference type="eggNOG" id="KOG0595">
    <property type="taxonomic scope" value="Eukaryota"/>
</dbReference>
<dbReference type="GeneTree" id="ENSGT00940000158197"/>
<dbReference type="HOGENOM" id="CLU_026714_1_0_1"/>
<dbReference type="InParanoid" id="Q80ZW0"/>
<dbReference type="OMA" id="HDMLAVN"/>
<dbReference type="OrthoDB" id="4062651at2759"/>
<dbReference type="PhylomeDB" id="Q80ZW0"/>
<dbReference type="TreeFam" id="TF105336"/>
<dbReference type="BioGRID-ORCS" id="67333">
    <property type="hits" value="5 hits in 81 CRISPR screens"/>
</dbReference>
<dbReference type="PRO" id="PR:Q80ZW0"/>
<dbReference type="Proteomes" id="UP000000589">
    <property type="component" value="Chromosome 2"/>
</dbReference>
<dbReference type="RNAct" id="Q80ZW0">
    <property type="molecule type" value="protein"/>
</dbReference>
<dbReference type="Bgee" id="ENSMUSG00000037885">
    <property type="expression patterns" value="Expressed in retinal neural layer and 209 other cell types or tissues"/>
</dbReference>
<dbReference type="ExpressionAtlas" id="Q80ZW0">
    <property type="expression patterns" value="baseline and differential"/>
</dbReference>
<dbReference type="GO" id="GO:0005737">
    <property type="term" value="C:cytoplasm"/>
    <property type="evidence" value="ECO:0007669"/>
    <property type="project" value="UniProtKB-SubCell"/>
</dbReference>
<dbReference type="GO" id="GO:0016604">
    <property type="term" value="C:nuclear body"/>
    <property type="evidence" value="ECO:0007669"/>
    <property type="project" value="Ensembl"/>
</dbReference>
<dbReference type="GO" id="GO:0005730">
    <property type="term" value="C:nucleolus"/>
    <property type="evidence" value="ECO:0007669"/>
    <property type="project" value="UniProtKB-SubCell"/>
</dbReference>
<dbReference type="GO" id="GO:0005524">
    <property type="term" value="F:ATP binding"/>
    <property type="evidence" value="ECO:0007669"/>
    <property type="project" value="UniProtKB-KW"/>
</dbReference>
<dbReference type="GO" id="GO:0106310">
    <property type="term" value="F:protein serine kinase activity"/>
    <property type="evidence" value="ECO:0007669"/>
    <property type="project" value="RHEA"/>
</dbReference>
<dbReference type="GO" id="GO:0004674">
    <property type="term" value="F:protein serine/threonine kinase activity"/>
    <property type="evidence" value="ECO:0007669"/>
    <property type="project" value="UniProtKB-KW"/>
</dbReference>
<dbReference type="CDD" id="cd13977">
    <property type="entry name" value="STKc_PDIK1L"/>
    <property type="match status" value="1"/>
</dbReference>
<dbReference type="FunFam" id="1.10.510.10:FF:000655">
    <property type="entry name" value="serine/threonine-protein kinase 35"/>
    <property type="match status" value="1"/>
</dbReference>
<dbReference type="FunFam" id="3.30.200.20:FF:000165">
    <property type="entry name" value="Serine/threonine-protein kinase PDIK1L"/>
    <property type="match status" value="1"/>
</dbReference>
<dbReference type="Gene3D" id="3.30.200.20">
    <property type="entry name" value="Phosphorylase Kinase, domain 1"/>
    <property type="match status" value="1"/>
</dbReference>
<dbReference type="Gene3D" id="1.10.510.10">
    <property type="entry name" value="Transferase(Phosphotransferase) domain 1"/>
    <property type="match status" value="1"/>
</dbReference>
<dbReference type="InterPro" id="IPR050339">
    <property type="entry name" value="CC_SR_Kinase"/>
</dbReference>
<dbReference type="InterPro" id="IPR011009">
    <property type="entry name" value="Kinase-like_dom_sf"/>
</dbReference>
<dbReference type="InterPro" id="IPR000719">
    <property type="entry name" value="Prot_kinase_dom"/>
</dbReference>
<dbReference type="InterPro" id="IPR017441">
    <property type="entry name" value="Protein_kinase_ATP_BS"/>
</dbReference>
<dbReference type="InterPro" id="IPR008271">
    <property type="entry name" value="Ser/Thr_kinase_AS"/>
</dbReference>
<dbReference type="PANTHER" id="PTHR11042">
    <property type="entry name" value="EUKARYOTIC TRANSLATION INITIATION FACTOR 2-ALPHA KINASE EIF2-ALPHA KINASE -RELATED"/>
    <property type="match status" value="1"/>
</dbReference>
<dbReference type="PANTHER" id="PTHR11042:SF59">
    <property type="entry name" value="SERINE_THREONINE-PROTEIN KINASE 35"/>
    <property type="match status" value="1"/>
</dbReference>
<dbReference type="Pfam" id="PF00069">
    <property type="entry name" value="Pkinase"/>
    <property type="match status" value="1"/>
</dbReference>
<dbReference type="SMART" id="SM00220">
    <property type="entry name" value="S_TKc"/>
    <property type="match status" value="1"/>
</dbReference>
<dbReference type="SUPFAM" id="SSF56112">
    <property type="entry name" value="Protein kinase-like (PK-like)"/>
    <property type="match status" value="1"/>
</dbReference>
<dbReference type="PROSITE" id="PS00107">
    <property type="entry name" value="PROTEIN_KINASE_ATP"/>
    <property type="match status" value="1"/>
</dbReference>
<dbReference type="PROSITE" id="PS50011">
    <property type="entry name" value="PROTEIN_KINASE_DOM"/>
    <property type="match status" value="1"/>
</dbReference>
<dbReference type="PROSITE" id="PS00108">
    <property type="entry name" value="PROTEIN_KINASE_ST"/>
    <property type="match status" value="1"/>
</dbReference>
<accession>Q80ZW0</accession>
<accession>A2ANF2</accession>
<accession>Q3TMD8</accession>
<accession>Q8BIC2</accession>
<evidence type="ECO:0000250" key="1"/>
<evidence type="ECO:0000255" key="2">
    <source>
        <dbReference type="PROSITE-ProRule" id="PRU00159"/>
    </source>
</evidence>
<evidence type="ECO:0000255" key="3">
    <source>
        <dbReference type="PROSITE-ProRule" id="PRU10027"/>
    </source>
</evidence>
<evidence type="ECO:0000256" key="4">
    <source>
        <dbReference type="SAM" id="MobiDB-lite"/>
    </source>
</evidence>
<evidence type="ECO:0000305" key="5"/>